<dbReference type="EMBL" id="CP000377">
    <property type="protein sequence ID" value="ABF62935.1"/>
    <property type="molecule type" value="Genomic_DNA"/>
</dbReference>
<dbReference type="RefSeq" id="WP_005610003.1">
    <property type="nucleotide sequence ID" value="NC_008044.1"/>
</dbReference>
<dbReference type="SMR" id="Q1GK81"/>
<dbReference type="STRING" id="292414.TM1040_0202"/>
<dbReference type="GeneID" id="28251787"/>
<dbReference type="KEGG" id="sit:TM1040_0202"/>
<dbReference type="eggNOG" id="COG0776">
    <property type="taxonomic scope" value="Bacteria"/>
</dbReference>
<dbReference type="HOGENOM" id="CLU_105066_2_0_5"/>
<dbReference type="OrthoDB" id="9804203at2"/>
<dbReference type="Proteomes" id="UP000000636">
    <property type="component" value="Chromosome"/>
</dbReference>
<dbReference type="GO" id="GO:0005694">
    <property type="term" value="C:chromosome"/>
    <property type="evidence" value="ECO:0007669"/>
    <property type="project" value="InterPro"/>
</dbReference>
<dbReference type="GO" id="GO:0005829">
    <property type="term" value="C:cytosol"/>
    <property type="evidence" value="ECO:0007669"/>
    <property type="project" value="TreeGrafter"/>
</dbReference>
<dbReference type="GO" id="GO:0003677">
    <property type="term" value="F:DNA binding"/>
    <property type="evidence" value="ECO:0007669"/>
    <property type="project" value="UniProtKB-UniRule"/>
</dbReference>
<dbReference type="GO" id="GO:0030527">
    <property type="term" value="F:structural constituent of chromatin"/>
    <property type="evidence" value="ECO:0007669"/>
    <property type="project" value="InterPro"/>
</dbReference>
<dbReference type="GO" id="GO:0006310">
    <property type="term" value="P:DNA recombination"/>
    <property type="evidence" value="ECO:0007669"/>
    <property type="project" value="UniProtKB-UniRule"/>
</dbReference>
<dbReference type="GO" id="GO:0006355">
    <property type="term" value="P:regulation of DNA-templated transcription"/>
    <property type="evidence" value="ECO:0007669"/>
    <property type="project" value="UniProtKB-UniRule"/>
</dbReference>
<dbReference type="GO" id="GO:0006417">
    <property type="term" value="P:regulation of translation"/>
    <property type="evidence" value="ECO:0007669"/>
    <property type="project" value="UniProtKB-UniRule"/>
</dbReference>
<dbReference type="CDD" id="cd13836">
    <property type="entry name" value="IHF_B"/>
    <property type="match status" value="1"/>
</dbReference>
<dbReference type="Gene3D" id="4.10.520.10">
    <property type="entry name" value="IHF-like DNA-binding proteins"/>
    <property type="match status" value="1"/>
</dbReference>
<dbReference type="HAMAP" id="MF_00381">
    <property type="entry name" value="IHF_beta"/>
    <property type="match status" value="1"/>
</dbReference>
<dbReference type="InterPro" id="IPR000119">
    <property type="entry name" value="Hist_DNA-bd"/>
</dbReference>
<dbReference type="InterPro" id="IPR020816">
    <property type="entry name" value="Histone-like_DNA-bd_CS"/>
</dbReference>
<dbReference type="InterPro" id="IPR010992">
    <property type="entry name" value="IHF-like_DNA-bd_dom_sf"/>
</dbReference>
<dbReference type="InterPro" id="IPR005685">
    <property type="entry name" value="IHF_beta"/>
</dbReference>
<dbReference type="NCBIfam" id="TIGR00988">
    <property type="entry name" value="hip"/>
    <property type="match status" value="1"/>
</dbReference>
<dbReference type="NCBIfam" id="NF001222">
    <property type="entry name" value="PRK00199.1"/>
    <property type="match status" value="1"/>
</dbReference>
<dbReference type="PANTHER" id="PTHR33175">
    <property type="entry name" value="DNA-BINDING PROTEIN HU"/>
    <property type="match status" value="1"/>
</dbReference>
<dbReference type="PANTHER" id="PTHR33175:SF5">
    <property type="entry name" value="INTEGRATION HOST FACTOR SUBUNIT BETA"/>
    <property type="match status" value="1"/>
</dbReference>
<dbReference type="Pfam" id="PF00216">
    <property type="entry name" value="Bac_DNA_binding"/>
    <property type="match status" value="1"/>
</dbReference>
<dbReference type="PRINTS" id="PR01727">
    <property type="entry name" value="DNABINDINGHU"/>
</dbReference>
<dbReference type="SMART" id="SM00411">
    <property type="entry name" value="BHL"/>
    <property type="match status" value="1"/>
</dbReference>
<dbReference type="SUPFAM" id="SSF47729">
    <property type="entry name" value="IHF-like DNA-binding proteins"/>
    <property type="match status" value="1"/>
</dbReference>
<dbReference type="PROSITE" id="PS00045">
    <property type="entry name" value="HISTONE_LIKE"/>
    <property type="match status" value="1"/>
</dbReference>
<sequence>MIRSELIQKIADENPHLYQRDVERIVNTVFEEVTNAMSRGDRVELRGFGAFSVKKRDARVGRNPRTGETVHVEEKHVPFFKTGKLLRDRLNGKEE</sequence>
<protein>
    <recommendedName>
        <fullName evidence="1">Integration host factor subunit beta</fullName>
        <shortName evidence="1">IHF-beta</shortName>
    </recommendedName>
</protein>
<accession>Q1GK81</accession>
<organism>
    <name type="scientific">Ruegeria sp. (strain TM1040)</name>
    <name type="common">Silicibacter sp.</name>
    <dbReference type="NCBI Taxonomy" id="292414"/>
    <lineage>
        <taxon>Bacteria</taxon>
        <taxon>Pseudomonadati</taxon>
        <taxon>Pseudomonadota</taxon>
        <taxon>Alphaproteobacteria</taxon>
        <taxon>Rhodobacterales</taxon>
        <taxon>Roseobacteraceae</taxon>
        <taxon>Ruegeria</taxon>
    </lineage>
</organism>
<feature type="chain" id="PRO_1000060670" description="Integration host factor subunit beta">
    <location>
        <begin position="1"/>
        <end position="95"/>
    </location>
</feature>
<name>IHFB_RUEST</name>
<gene>
    <name evidence="1" type="primary">ihfB</name>
    <name evidence="1" type="synonym">himD</name>
    <name type="ordered locus">TM1040_0202</name>
</gene>
<keyword id="KW-0233">DNA recombination</keyword>
<keyword id="KW-0238">DNA-binding</keyword>
<keyword id="KW-1185">Reference proteome</keyword>
<keyword id="KW-0804">Transcription</keyword>
<keyword id="KW-0805">Transcription regulation</keyword>
<keyword id="KW-0810">Translation regulation</keyword>
<proteinExistence type="inferred from homology"/>
<reference key="1">
    <citation type="submission" date="2006-05" db="EMBL/GenBank/DDBJ databases">
        <title>Complete sequence of chromosome of Silicibacter sp. TM1040.</title>
        <authorList>
            <consortium name="US DOE Joint Genome Institute"/>
            <person name="Copeland A."/>
            <person name="Lucas S."/>
            <person name="Lapidus A."/>
            <person name="Barry K."/>
            <person name="Detter J.C."/>
            <person name="Glavina del Rio T."/>
            <person name="Hammon N."/>
            <person name="Israni S."/>
            <person name="Dalin E."/>
            <person name="Tice H."/>
            <person name="Pitluck S."/>
            <person name="Brettin T."/>
            <person name="Bruce D."/>
            <person name="Han C."/>
            <person name="Tapia R."/>
            <person name="Goodwin L."/>
            <person name="Thompson L.S."/>
            <person name="Gilna P."/>
            <person name="Schmutz J."/>
            <person name="Larimer F."/>
            <person name="Land M."/>
            <person name="Hauser L."/>
            <person name="Kyrpides N."/>
            <person name="Kim E."/>
            <person name="Belas R."/>
            <person name="Moran M.A."/>
            <person name="Buchan A."/>
            <person name="Gonzalez J.M."/>
            <person name="Schell M.A."/>
            <person name="Sun F."/>
            <person name="Richardson P."/>
        </authorList>
    </citation>
    <scope>NUCLEOTIDE SEQUENCE [LARGE SCALE GENOMIC DNA]</scope>
    <source>
        <strain>TM1040</strain>
    </source>
</reference>
<evidence type="ECO:0000255" key="1">
    <source>
        <dbReference type="HAMAP-Rule" id="MF_00381"/>
    </source>
</evidence>
<comment type="function">
    <text evidence="1">This protein is one of the two subunits of integration host factor, a specific DNA-binding protein that functions in genetic recombination as well as in transcriptional and translational control.</text>
</comment>
<comment type="subunit">
    <text evidence="1">Heterodimer of an alpha and a beta chain.</text>
</comment>
<comment type="similarity">
    <text evidence="1">Belongs to the bacterial histone-like protein family.</text>
</comment>